<name>FIBA_MACFU</name>
<feature type="peptide" id="PRO_0000009027" description="Fibrinopeptide A">
    <location>
        <begin position="1"/>
        <end position="16"/>
    </location>
</feature>
<feature type="non-terminal residue">
    <location>
        <position position="16"/>
    </location>
</feature>
<feature type="helix" evidence="3">
    <location>
        <begin position="9"/>
        <end position="11"/>
    </location>
</feature>
<comment type="function">
    <text evidence="1">Cleaved by the protease thrombin to yield monomers which, together with fibrinogen beta (FGB) and fibrinogen gamma (FGG), polymerize to form an insoluble fibrin matrix. Fibrin has a major function in hemostasis as one of the primary components of blood clots. In addition, functions during the early stages of wound repair to stabilize the lesion and guide cell migration during re-epithelialization. Was originally thought to be essential for platelet aggregation, based on in vitro studies using anticoagulated blood. However, subsequent studies have shown that it is not absolutely required for thrombus formation in vivo. Enhances expression of SELP in activated platelets via an ITGB3-dependent pathway. Maternal fibrinogen is essential for successful pregnancy. Fibrin deposition is also associated with infection, where it protects against IFNG-mediated hemorrhage. May also facilitate the immune response via both innate and T-cell mediated pathways.</text>
</comment>
<comment type="subunit">
    <text evidence="2">Heterohexamer; disulfide linked. Contains 2 sets of 3 non-identical chains (alpha, beta and gamma). The 2 heterotrimers are in head to head conformation with the N-termini in a small central domain (By similarity).</text>
</comment>
<comment type="subcellular location">
    <subcellularLocation>
        <location>Secreted</location>
    </subcellularLocation>
</comment>
<comment type="domain">
    <text evidence="2">A long coiled coil structure formed by 3 polypeptide chains connects the central nodule to the C-terminal domains (distal nodules). The long C-terminal ends of the alpha chains fold back, contributing a fourth strand to the coiled coil structure.</text>
</comment>
<comment type="PTM">
    <text>Conversion of fibrinogen to fibrin is triggered by thrombin, which cleaves fibrinopeptides A and B from alpha and beta chains, and thus exposes the N-terminal polymerization sites responsible for the formation of the soft clot. The soft clot is converted into the hard clot by factor XIIIA which catalyzes the epsilon-(gamma-glutamyl)lysine cross-linking between gamma chains (stronger) and between alpha chains (weaker) of different monomers.</text>
</comment>
<comment type="PTM">
    <text>Forms F13A-mediated cross-links between a glutamine and the epsilon-amino group of a lysine residue, forming fibronectin-fibrinogen heteropolymers.</text>
</comment>
<gene>
    <name type="primary">FGA</name>
</gene>
<organism>
    <name type="scientific">Macaca fuscata fuscata</name>
    <name type="common">Japanese macaque</name>
    <dbReference type="NCBI Taxonomy" id="9543"/>
    <lineage>
        <taxon>Eukaryota</taxon>
        <taxon>Metazoa</taxon>
        <taxon>Chordata</taxon>
        <taxon>Craniata</taxon>
        <taxon>Vertebrata</taxon>
        <taxon>Euteleostomi</taxon>
        <taxon>Mammalia</taxon>
        <taxon>Eutheria</taxon>
        <taxon>Euarchontoglires</taxon>
        <taxon>Primates</taxon>
        <taxon>Haplorrhini</taxon>
        <taxon>Catarrhini</taxon>
        <taxon>Cercopithecidae</taxon>
        <taxon>Cercopithecinae</taxon>
        <taxon>Macaca</taxon>
    </lineage>
</organism>
<evidence type="ECO:0000250" key="1">
    <source>
        <dbReference type="UniProtKB" id="E9PV24"/>
    </source>
</evidence>
<evidence type="ECO:0000250" key="2">
    <source>
        <dbReference type="UniProtKB" id="P02671"/>
    </source>
</evidence>
<evidence type="ECO:0007829" key="3">
    <source>
        <dbReference type="PDB" id="1UCY"/>
    </source>
</evidence>
<proteinExistence type="evidence at protein level"/>
<protein>
    <recommendedName>
        <fullName>Fibrinogen alpha chain</fullName>
    </recommendedName>
    <component>
        <recommendedName>
            <fullName>Fibrinopeptide A</fullName>
        </recommendedName>
    </component>
</protein>
<accession>P68108</accession>
<accession>P12803</accession>
<keyword id="KW-0002">3D-structure</keyword>
<keyword id="KW-1064">Adaptive immunity</keyword>
<keyword id="KW-0094">Blood coagulation</keyword>
<keyword id="KW-0175">Coiled coil</keyword>
<keyword id="KW-0903">Direct protein sequencing</keyword>
<keyword id="KW-1015">Disulfide bond</keyword>
<keyword id="KW-0356">Hemostasis</keyword>
<keyword id="KW-0391">Immunity</keyword>
<keyword id="KW-0399">Innate immunity</keyword>
<keyword id="KW-0964">Secreted</keyword>
<dbReference type="PIR" id="A24180">
    <property type="entry name" value="A24180"/>
</dbReference>
<dbReference type="PDB" id="1UCY">
    <property type="method" value="X-ray"/>
    <property type="resolution" value="2.20 A"/>
    <property type="chains" value="F/G/I=7-15"/>
</dbReference>
<dbReference type="PDBsum" id="1UCY"/>
<dbReference type="SMR" id="P68108"/>
<dbReference type="EvolutionaryTrace" id="P68108"/>
<dbReference type="GO" id="GO:0005576">
    <property type="term" value="C:extracellular region"/>
    <property type="evidence" value="ECO:0007669"/>
    <property type="project" value="UniProtKB-SubCell"/>
</dbReference>
<dbReference type="GO" id="GO:0002250">
    <property type="term" value="P:adaptive immune response"/>
    <property type="evidence" value="ECO:0007669"/>
    <property type="project" value="UniProtKB-KW"/>
</dbReference>
<dbReference type="GO" id="GO:0007596">
    <property type="term" value="P:blood coagulation"/>
    <property type="evidence" value="ECO:0007669"/>
    <property type="project" value="UniProtKB-KW"/>
</dbReference>
<dbReference type="GO" id="GO:0045087">
    <property type="term" value="P:innate immune response"/>
    <property type="evidence" value="ECO:0007669"/>
    <property type="project" value="UniProtKB-KW"/>
</dbReference>
<sequence>ADTGEGDFLAEGGGVR</sequence>
<reference key="1">
    <citation type="journal article" date="1985" name="J. Biochem.">
        <title>Fibrinopeptides A and B of Japanese monkey (Macaca fuscata) and patas monkey (Erythrocebus patas): their amino acid sequences, restricted mutations, and a molecular phylogeny for macaques, guenons, and baboons.</title>
        <authorList>
            <person name="Nakamura S."/>
            <person name="Takenaka O."/>
            <person name="Takahashi K."/>
        </authorList>
    </citation>
    <scope>PROTEIN SEQUENCE</scope>
</reference>